<proteinExistence type="evidence at protein level"/>
<accession>Q86Y39</accession>
<accession>C9JT23</accession>
<accession>Q6ZS66</accession>
<evidence type="ECO:0000250" key="1">
    <source>
        <dbReference type="UniProtKB" id="Q8HXG6"/>
    </source>
</evidence>
<evidence type="ECO:0000255" key="2"/>
<evidence type="ECO:0000269" key="3">
    <source>
    </source>
</evidence>
<evidence type="ECO:0000269" key="4">
    <source>
    </source>
</evidence>
<evidence type="ECO:0000269" key="5">
    <source>
    </source>
</evidence>
<evidence type="ECO:0000269" key="6">
    <source>
    </source>
</evidence>
<evidence type="ECO:0000303" key="7">
    <source>
    </source>
</evidence>
<evidence type="ECO:0000305" key="8"/>
<evidence type="ECO:0000305" key="9">
    <source>
    </source>
</evidence>
<comment type="function">
    <text evidence="6">Accessory subunit of the mitochondrial membrane respiratory chain NADH dehydrogenase (Complex I), that is believed not to be involved in catalysis. Complex I functions in the transfer of electrons from NADH to the respiratory chain. The immediate electron acceptor for the enzyme is believed to be ubiquinone.</text>
</comment>
<comment type="subunit">
    <text evidence="3 6">Complex I is composed of 45 different subunits.</text>
</comment>
<comment type="interaction">
    <interactant intactId="EBI-1246415">
        <id>Q86Y39</id>
    </interactant>
    <interactant intactId="EBI-16439278">
        <id>Q6FHY5</id>
        <label>MEOX2</label>
    </interactant>
    <organismsDiffer>false</organismsDiffer>
    <experiments>3</experiments>
</comment>
<comment type="subcellular location">
    <subcellularLocation>
        <location evidence="9">Mitochondrion inner membrane</location>
        <topology evidence="2">Multi-pass membrane protein</topology>
        <orientation evidence="8">Matrix side</orientation>
    </subcellularLocation>
</comment>
<comment type="alternative products">
    <event type="alternative splicing"/>
    <isoform>
        <id>Q86Y39-1</id>
        <name>1</name>
        <sequence type="displayed"/>
    </isoform>
    <isoform>
        <id>Q86Y39-2</id>
        <name>2</name>
        <sequence type="described" ref="VSP_033813"/>
    </isoform>
</comment>
<comment type="disease" evidence="5">
    <disease id="DI-05411">
        <name>Mitochondrial complex I deficiency, nuclear type 14</name>
        <acronym>MC1DN14</acronym>
        <description>A form of mitochondrial complex I deficiency, the most common biochemical signature of mitochondrial disorders, a group of highly heterogeneous conditions characterized by defective oxidative phosphorylation, which collectively affects 1 in 5-10000 live births. Clinical disorders have variable severity, ranging from lethal neonatal disease to adult-onset neurodegenerative disorders. Phenotypes include macrocephaly with progressive leukodystrophy, non-specific encephalopathy, cardiomyopathy, myopathy, liver disease, Leigh syndrome, Leber hereditary optic neuropathy, and some forms of Parkinson disease. MC1DN14 transmission pattern is consistent with autosomal recessive inheritance.</description>
        <dbReference type="MIM" id="618236"/>
    </disease>
    <text>The disease is caused by variants affecting the gene represented in this entry.</text>
</comment>
<comment type="similarity">
    <text evidence="8">Belongs to the complex I NDUFA11 subunit family.</text>
</comment>
<comment type="sequence caution" evidence="8">
    <conflict type="miscellaneous discrepancy">
        <sequence resource="EMBL-CDS" id="BAC87088"/>
    </conflict>
    <text>Erroneous CDS prediction.</text>
</comment>
<dbReference type="EMBL" id="AJ539081">
    <property type="protein sequence ID" value="CAD62165.1"/>
    <property type="molecule type" value="mRNA"/>
</dbReference>
<dbReference type="EMBL" id="AK127692">
    <property type="protein sequence ID" value="BAC87088.1"/>
    <property type="status" value="ALT_SEQ"/>
    <property type="molecule type" value="mRNA"/>
</dbReference>
<dbReference type="EMBL" id="AC024592">
    <property type="status" value="NOT_ANNOTATED_CDS"/>
    <property type="molecule type" value="Genomic_DNA"/>
</dbReference>
<dbReference type="EMBL" id="AC104532">
    <property type="status" value="NOT_ANNOTATED_CDS"/>
    <property type="molecule type" value="Genomic_DNA"/>
</dbReference>
<dbReference type="EMBL" id="BC069045">
    <property type="protein sequence ID" value="AAH69045.1"/>
    <property type="molecule type" value="mRNA"/>
</dbReference>
<dbReference type="CCDS" id="CCDS12155.1">
    <molecule id="Q86Y39-1"/>
</dbReference>
<dbReference type="CCDS" id="CCDS54203.1">
    <molecule id="Q86Y39-2"/>
</dbReference>
<dbReference type="RefSeq" id="NP_001180304.1">
    <molecule id="Q86Y39-2"/>
    <property type="nucleotide sequence ID" value="NM_001193375.3"/>
</dbReference>
<dbReference type="RefSeq" id="NP_783313.1">
    <molecule id="Q86Y39-1"/>
    <property type="nucleotide sequence ID" value="NM_175614.5"/>
</dbReference>
<dbReference type="PDB" id="5XTC">
    <property type="method" value="EM"/>
    <property type="resolution" value="3.70 A"/>
    <property type="chains" value="V=2-141"/>
</dbReference>
<dbReference type="PDB" id="5XTD">
    <property type="method" value="EM"/>
    <property type="resolution" value="3.70 A"/>
    <property type="chains" value="V=2-141"/>
</dbReference>
<dbReference type="PDB" id="5XTH">
    <property type="method" value="EM"/>
    <property type="resolution" value="3.90 A"/>
    <property type="chains" value="V=2-141"/>
</dbReference>
<dbReference type="PDB" id="5XTI">
    <property type="method" value="EM"/>
    <property type="resolution" value="17.40 A"/>
    <property type="chains" value="BV/V=2-141"/>
</dbReference>
<dbReference type="PDBsum" id="5XTC"/>
<dbReference type="PDBsum" id="5XTD"/>
<dbReference type="PDBsum" id="5XTH"/>
<dbReference type="PDBsum" id="5XTI"/>
<dbReference type="SMR" id="Q86Y39"/>
<dbReference type="BioGRID" id="125981">
    <property type="interactions" value="68"/>
</dbReference>
<dbReference type="ComplexPortal" id="CPX-577">
    <property type="entry name" value="Mitochondrial respiratory chain complex I"/>
</dbReference>
<dbReference type="CORUM" id="Q86Y39"/>
<dbReference type="FunCoup" id="Q86Y39">
    <property type="interactions" value="843"/>
</dbReference>
<dbReference type="IntAct" id="Q86Y39">
    <property type="interactions" value="44"/>
</dbReference>
<dbReference type="MINT" id="Q86Y39"/>
<dbReference type="STRING" id="9606.ENSP00000389160"/>
<dbReference type="BindingDB" id="Q86Y39"/>
<dbReference type="ChEMBL" id="CHEMBL2363065"/>
<dbReference type="DrugBank" id="DB00157">
    <property type="generic name" value="NADH"/>
</dbReference>
<dbReference type="DrugCentral" id="Q86Y39"/>
<dbReference type="GlyGen" id="Q86Y39">
    <property type="glycosylation" value="1 site, 1 O-linked glycan (1 site)"/>
</dbReference>
<dbReference type="iPTMnet" id="Q86Y39"/>
<dbReference type="PhosphoSitePlus" id="Q86Y39"/>
<dbReference type="SwissPalm" id="Q86Y39"/>
<dbReference type="BioMuta" id="NDUFA11"/>
<dbReference type="DMDM" id="52000823"/>
<dbReference type="jPOST" id="Q86Y39"/>
<dbReference type="MassIVE" id="Q86Y39"/>
<dbReference type="PaxDb" id="9606-ENSP00000389160"/>
<dbReference type="PeptideAtlas" id="Q86Y39"/>
<dbReference type="ProteomicsDB" id="11546"/>
<dbReference type="ProteomicsDB" id="70371">
    <molecule id="Q86Y39-1"/>
</dbReference>
<dbReference type="ProteomicsDB" id="70372">
    <molecule id="Q86Y39-2"/>
</dbReference>
<dbReference type="Pumba" id="Q86Y39"/>
<dbReference type="TopDownProteomics" id="Q86Y39-1">
    <molecule id="Q86Y39-1"/>
</dbReference>
<dbReference type="Antibodypedia" id="52912">
    <property type="antibodies" value="78 antibodies from 24 providers"/>
</dbReference>
<dbReference type="DNASU" id="126328"/>
<dbReference type="Ensembl" id="ENST00000308961.5">
    <molecule id="Q86Y39-1"/>
    <property type="protein sequence ID" value="ENSP00000311740.4"/>
    <property type="gene ID" value="ENSG00000174886.15"/>
</dbReference>
<dbReference type="Ensembl" id="ENST00000418389.7">
    <molecule id="Q86Y39-2"/>
    <property type="protein sequence ID" value="ENSP00000389160.1"/>
    <property type="gene ID" value="ENSG00000174886.15"/>
</dbReference>
<dbReference type="Ensembl" id="ENST00000709622.1">
    <molecule id="Q86Y39-2"/>
    <property type="protein sequence ID" value="ENSP00000517806.1"/>
    <property type="gene ID" value="ENSG00000292058.1"/>
</dbReference>
<dbReference type="Ensembl" id="ENST00000709624.1">
    <molecule id="Q86Y39-1"/>
    <property type="protein sequence ID" value="ENSP00000517808.1"/>
    <property type="gene ID" value="ENSG00000292058.1"/>
</dbReference>
<dbReference type="GeneID" id="126328"/>
<dbReference type="KEGG" id="hsa:126328"/>
<dbReference type="MANE-Select" id="ENST00000308961.5">
    <property type="protein sequence ID" value="ENSP00000311740.4"/>
    <property type="RefSeq nucleotide sequence ID" value="NM_175614.5"/>
    <property type="RefSeq protein sequence ID" value="NP_783313.1"/>
</dbReference>
<dbReference type="UCSC" id="uc002mdp.3">
    <molecule id="Q86Y39-1"/>
    <property type="organism name" value="human"/>
</dbReference>
<dbReference type="AGR" id="HGNC:20371"/>
<dbReference type="CTD" id="126328"/>
<dbReference type="DisGeNET" id="126328"/>
<dbReference type="GeneCards" id="NDUFA11"/>
<dbReference type="HGNC" id="HGNC:20371">
    <property type="gene designation" value="NDUFA11"/>
</dbReference>
<dbReference type="HPA" id="ENSG00000174886">
    <property type="expression patterns" value="Low tissue specificity"/>
</dbReference>
<dbReference type="MalaCards" id="NDUFA11"/>
<dbReference type="MIM" id="612638">
    <property type="type" value="gene"/>
</dbReference>
<dbReference type="MIM" id="618236">
    <property type="type" value="phenotype"/>
</dbReference>
<dbReference type="neXtProt" id="NX_Q86Y39"/>
<dbReference type="OpenTargets" id="ENSG00000174886"/>
<dbReference type="Orphanet" id="2609">
    <property type="disease" value="Isolated complex I deficiency"/>
</dbReference>
<dbReference type="PharmGKB" id="PA134914606"/>
<dbReference type="VEuPathDB" id="HostDB:ENSG00000174886"/>
<dbReference type="eggNOG" id="ENOG502S6F6">
    <property type="taxonomic scope" value="Eukaryota"/>
</dbReference>
<dbReference type="GeneTree" id="ENSGT00390000012434"/>
<dbReference type="HOGENOM" id="CLU_1214425_0_0_1"/>
<dbReference type="InParanoid" id="Q86Y39"/>
<dbReference type="OMA" id="SIEQGWE"/>
<dbReference type="OrthoDB" id="1913277at2759"/>
<dbReference type="PAN-GO" id="Q86Y39">
    <property type="GO annotations" value="1 GO annotation based on evolutionary models"/>
</dbReference>
<dbReference type="PhylomeDB" id="Q86Y39"/>
<dbReference type="TreeFam" id="TF314729"/>
<dbReference type="BioCyc" id="MetaCyc:HS16402-MONOMER"/>
<dbReference type="PathwayCommons" id="Q86Y39"/>
<dbReference type="Reactome" id="R-HSA-611105">
    <property type="pathway name" value="Respiratory electron transport"/>
</dbReference>
<dbReference type="Reactome" id="R-HSA-6799198">
    <property type="pathway name" value="Complex I biogenesis"/>
</dbReference>
<dbReference type="SignaLink" id="Q86Y39"/>
<dbReference type="SIGNOR" id="Q86Y39"/>
<dbReference type="BioGRID-ORCS" id="126328">
    <property type="hits" value="400 hits in 1142 CRISPR screens"/>
</dbReference>
<dbReference type="ChiTaRS" id="NDUFA11">
    <property type="organism name" value="human"/>
</dbReference>
<dbReference type="GenomeRNAi" id="126328"/>
<dbReference type="Pharos" id="Q86Y39">
    <property type="development level" value="Tclin"/>
</dbReference>
<dbReference type="PRO" id="PR:Q86Y39"/>
<dbReference type="Proteomes" id="UP000005640">
    <property type="component" value="Chromosome 19"/>
</dbReference>
<dbReference type="RNAct" id="Q86Y39">
    <property type="molecule type" value="protein"/>
</dbReference>
<dbReference type="Bgee" id="ENSG00000174886">
    <property type="expression patterns" value="Expressed in pancreatic ductal cell and 183 other cell types or tissues"/>
</dbReference>
<dbReference type="ExpressionAtlas" id="Q86Y39">
    <property type="expression patterns" value="baseline and differential"/>
</dbReference>
<dbReference type="GO" id="GO:0005743">
    <property type="term" value="C:mitochondrial inner membrane"/>
    <property type="evidence" value="ECO:0000314"/>
    <property type="project" value="ComplexPortal"/>
</dbReference>
<dbReference type="GO" id="GO:0005739">
    <property type="term" value="C:mitochondrion"/>
    <property type="evidence" value="ECO:0006056"/>
    <property type="project" value="FlyBase"/>
</dbReference>
<dbReference type="GO" id="GO:0045271">
    <property type="term" value="C:respiratory chain complex I"/>
    <property type="evidence" value="ECO:0000314"/>
    <property type="project" value="UniProtKB"/>
</dbReference>
<dbReference type="GO" id="GO:0009060">
    <property type="term" value="P:aerobic respiration"/>
    <property type="evidence" value="ECO:0000303"/>
    <property type="project" value="ComplexPortal"/>
</dbReference>
<dbReference type="GO" id="GO:0006120">
    <property type="term" value="P:mitochondrial electron transport, NADH to ubiquinone"/>
    <property type="evidence" value="ECO:0007669"/>
    <property type="project" value="InterPro"/>
</dbReference>
<dbReference type="GO" id="GO:0042776">
    <property type="term" value="P:proton motive force-driven mitochondrial ATP synthesis"/>
    <property type="evidence" value="ECO:0000303"/>
    <property type="project" value="ComplexPortal"/>
</dbReference>
<dbReference type="InterPro" id="IPR039205">
    <property type="entry name" value="NDUFA11"/>
</dbReference>
<dbReference type="PANTHER" id="PTHR21382:SF1">
    <property type="entry name" value="NADH DEHYDROGENASE [UBIQUINONE] 1 ALPHA SUBCOMPLEX SUBUNIT 11"/>
    <property type="match status" value="1"/>
</dbReference>
<dbReference type="PANTHER" id="PTHR21382">
    <property type="entry name" value="NADH-UBIQUINONE OXIDOREDUCTASE SUBUNIT"/>
    <property type="match status" value="1"/>
</dbReference>
<gene>
    <name type="primary">NDUFA11</name>
</gene>
<keyword id="KW-0002">3D-structure</keyword>
<keyword id="KW-0007">Acetylation</keyword>
<keyword id="KW-0025">Alternative splicing</keyword>
<keyword id="KW-0903">Direct protein sequencing</keyword>
<keyword id="KW-0249">Electron transport</keyword>
<keyword id="KW-0472">Membrane</keyword>
<keyword id="KW-0496">Mitochondrion</keyword>
<keyword id="KW-0999">Mitochondrion inner membrane</keyword>
<keyword id="KW-1274">Primary mitochondrial disease</keyword>
<keyword id="KW-1267">Proteomics identification</keyword>
<keyword id="KW-1185">Reference proteome</keyword>
<keyword id="KW-0679">Respiratory chain</keyword>
<keyword id="KW-0812">Transmembrane</keyword>
<keyword id="KW-1133">Transmembrane helix</keyword>
<keyword id="KW-0813">Transport</keyword>
<sequence length="141" mass="14852">MAPKVFRQYWDIPDGTDCHRKAYSTTSIASVAGLTAAAYRVTLNPPGTFLEGVAKVGQYTFTAAAVGAVFGLTTCISAHVREKPDDPLNYFLGGCAGGLTLGARTHNYGIGAAACVYFGIAASLVKMGRLEGWEVFAKPKV</sequence>
<protein>
    <recommendedName>
        <fullName>NADH dehydrogenase [ubiquinone] 1 alpha subcomplex subunit 11</fullName>
    </recommendedName>
    <alternativeName>
        <fullName>Complex I-B14.7</fullName>
        <shortName>CI-B14.7</shortName>
    </alternativeName>
    <alternativeName>
        <fullName>NADH-ubiquinone oxidoreductase subunit B14.7</fullName>
    </alternativeName>
</protein>
<reference key="1">
    <citation type="journal article" date="2003" name="J. Biol. Chem.">
        <title>The subunit composition of the human NADH dehydrogenase obtained by rapid one-step immunopurification.</title>
        <authorList>
            <person name="Murray J."/>
            <person name="Zhang B."/>
            <person name="Taylor S.W."/>
            <person name="Oglesbee D."/>
            <person name="Fahy E."/>
            <person name="Marusich M.F."/>
            <person name="Ghosh S.S."/>
            <person name="Capaldi R.A."/>
        </authorList>
    </citation>
    <scope>NUCLEOTIDE SEQUENCE [MRNA] (ISOFORM 1)</scope>
    <scope>IDENTIFICATION BY MASS SPECTROMETRY</scope>
    <scope>IDENTIFICATION IN THE NADH-UBIQUINONE OXIDOREDUCTASE COMPLEX</scope>
    <source>
        <tissue>Heart</tissue>
    </source>
</reference>
<reference key="2">
    <citation type="journal article" date="2004" name="Nat. Genet.">
        <title>Complete sequencing and characterization of 21,243 full-length human cDNAs.</title>
        <authorList>
            <person name="Ota T."/>
            <person name="Suzuki Y."/>
            <person name="Nishikawa T."/>
            <person name="Otsuki T."/>
            <person name="Sugiyama T."/>
            <person name="Irie R."/>
            <person name="Wakamatsu A."/>
            <person name="Hayashi K."/>
            <person name="Sato H."/>
            <person name="Nagai K."/>
            <person name="Kimura K."/>
            <person name="Makita H."/>
            <person name="Sekine M."/>
            <person name="Obayashi M."/>
            <person name="Nishi T."/>
            <person name="Shibahara T."/>
            <person name="Tanaka T."/>
            <person name="Ishii S."/>
            <person name="Yamamoto J."/>
            <person name="Saito K."/>
            <person name="Kawai Y."/>
            <person name="Isono Y."/>
            <person name="Nakamura Y."/>
            <person name="Nagahari K."/>
            <person name="Murakami K."/>
            <person name="Yasuda T."/>
            <person name="Iwayanagi T."/>
            <person name="Wagatsuma M."/>
            <person name="Shiratori A."/>
            <person name="Sudo H."/>
            <person name="Hosoiri T."/>
            <person name="Kaku Y."/>
            <person name="Kodaira H."/>
            <person name="Kondo H."/>
            <person name="Sugawara M."/>
            <person name="Takahashi M."/>
            <person name="Kanda K."/>
            <person name="Yokoi T."/>
            <person name="Furuya T."/>
            <person name="Kikkawa E."/>
            <person name="Omura Y."/>
            <person name="Abe K."/>
            <person name="Kamihara K."/>
            <person name="Katsuta N."/>
            <person name="Sato K."/>
            <person name="Tanikawa M."/>
            <person name="Yamazaki M."/>
            <person name="Ninomiya K."/>
            <person name="Ishibashi T."/>
            <person name="Yamashita H."/>
            <person name="Murakawa K."/>
            <person name="Fujimori K."/>
            <person name="Tanai H."/>
            <person name="Kimata M."/>
            <person name="Watanabe M."/>
            <person name="Hiraoka S."/>
            <person name="Chiba Y."/>
            <person name="Ishida S."/>
            <person name="Ono Y."/>
            <person name="Takiguchi S."/>
            <person name="Watanabe S."/>
            <person name="Yosida M."/>
            <person name="Hotuta T."/>
            <person name="Kusano J."/>
            <person name="Kanehori K."/>
            <person name="Takahashi-Fujii A."/>
            <person name="Hara H."/>
            <person name="Tanase T.-O."/>
            <person name="Nomura Y."/>
            <person name="Togiya S."/>
            <person name="Komai F."/>
            <person name="Hara R."/>
            <person name="Takeuchi K."/>
            <person name="Arita M."/>
            <person name="Imose N."/>
            <person name="Musashino K."/>
            <person name="Yuuki H."/>
            <person name="Oshima A."/>
            <person name="Sasaki N."/>
            <person name="Aotsuka S."/>
            <person name="Yoshikawa Y."/>
            <person name="Matsunawa H."/>
            <person name="Ichihara T."/>
            <person name="Shiohata N."/>
            <person name="Sano S."/>
            <person name="Moriya S."/>
            <person name="Momiyama H."/>
            <person name="Satoh N."/>
            <person name="Takami S."/>
            <person name="Terashima Y."/>
            <person name="Suzuki O."/>
            <person name="Nakagawa S."/>
            <person name="Senoh A."/>
            <person name="Mizoguchi H."/>
            <person name="Goto Y."/>
            <person name="Shimizu F."/>
            <person name="Wakebe H."/>
            <person name="Hishigaki H."/>
            <person name="Watanabe T."/>
            <person name="Sugiyama A."/>
            <person name="Takemoto M."/>
            <person name="Kawakami B."/>
            <person name="Yamazaki M."/>
            <person name="Watanabe K."/>
            <person name="Kumagai A."/>
            <person name="Itakura S."/>
            <person name="Fukuzumi Y."/>
            <person name="Fujimori Y."/>
            <person name="Komiyama M."/>
            <person name="Tashiro H."/>
            <person name="Tanigami A."/>
            <person name="Fujiwara T."/>
            <person name="Ono T."/>
            <person name="Yamada K."/>
            <person name="Fujii Y."/>
            <person name="Ozaki K."/>
            <person name="Hirao M."/>
            <person name="Ohmori Y."/>
            <person name="Kawabata A."/>
            <person name="Hikiji T."/>
            <person name="Kobatake N."/>
            <person name="Inagaki H."/>
            <person name="Ikema Y."/>
            <person name="Okamoto S."/>
            <person name="Okitani R."/>
            <person name="Kawakami T."/>
            <person name="Noguchi S."/>
            <person name="Itoh T."/>
            <person name="Shigeta K."/>
            <person name="Senba T."/>
            <person name="Matsumura K."/>
            <person name="Nakajima Y."/>
            <person name="Mizuno T."/>
            <person name="Morinaga M."/>
            <person name="Sasaki M."/>
            <person name="Togashi T."/>
            <person name="Oyama M."/>
            <person name="Hata H."/>
            <person name="Watanabe M."/>
            <person name="Komatsu T."/>
            <person name="Mizushima-Sugano J."/>
            <person name="Satoh T."/>
            <person name="Shirai Y."/>
            <person name="Takahashi Y."/>
            <person name="Nakagawa K."/>
            <person name="Okumura K."/>
            <person name="Nagase T."/>
            <person name="Nomura N."/>
            <person name="Kikuchi H."/>
            <person name="Masuho Y."/>
            <person name="Yamashita R."/>
            <person name="Nakai K."/>
            <person name="Yada T."/>
            <person name="Nakamura Y."/>
            <person name="Ohara O."/>
            <person name="Isogai T."/>
            <person name="Sugano S."/>
        </authorList>
    </citation>
    <scope>NUCLEOTIDE SEQUENCE [LARGE SCALE MRNA] (ISOFORM 2)</scope>
</reference>
<reference key="3">
    <citation type="journal article" date="2004" name="Nature">
        <title>The DNA sequence and biology of human chromosome 19.</title>
        <authorList>
            <person name="Grimwood J."/>
            <person name="Gordon L.A."/>
            <person name="Olsen A.S."/>
            <person name="Terry A."/>
            <person name="Schmutz J."/>
            <person name="Lamerdin J.E."/>
            <person name="Hellsten U."/>
            <person name="Goodstein D."/>
            <person name="Couronne O."/>
            <person name="Tran-Gyamfi M."/>
            <person name="Aerts A."/>
            <person name="Altherr M."/>
            <person name="Ashworth L."/>
            <person name="Bajorek E."/>
            <person name="Black S."/>
            <person name="Branscomb E."/>
            <person name="Caenepeel S."/>
            <person name="Carrano A.V."/>
            <person name="Caoile C."/>
            <person name="Chan Y.M."/>
            <person name="Christensen M."/>
            <person name="Cleland C.A."/>
            <person name="Copeland A."/>
            <person name="Dalin E."/>
            <person name="Dehal P."/>
            <person name="Denys M."/>
            <person name="Detter J.C."/>
            <person name="Escobar J."/>
            <person name="Flowers D."/>
            <person name="Fotopulos D."/>
            <person name="Garcia C."/>
            <person name="Georgescu A.M."/>
            <person name="Glavina T."/>
            <person name="Gomez M."/>
            <person name="Gonzales E."/>
            <person name="Groza M."/>
            <person name="Hammon N."/>
            <person name="Hawkins T."/>
            <person name="Haydu L."/>
            <person name="Ho I."/>
            <person name="Huang W."/>
            <person name="Israni S."/>
            <person name="Jett J."/>
            <person name="Kadner K."/>
            <person name="Kimball H."/>
            <person name="Kobayashi A."/>
            <person name="Larionov V."/>
            <person name="Leem S.-H."/>
            <person name="Lopez F."/>
            <person name="Lou Y."/>
            <person name="Lowry S."/>
            <person name="Malfatti S."/>
            <person name="Martinez D."/>
            <person name="McCready P.M."/>
            <person name="Medina C."/>
            <person name="Morgan J."/>
            <person name="Nelson K."/>
            <person name="Nolan M."/>
            <person name="Ovcharenko I."/>
            <person name="Pitluck S."/>
            <person name="Pollard M."/>
            <person name="Popkie A.P."/>
            <person name="Predki P."/>
            <person name="Quan G."/>
            <person name="Ramirez L."/>
            <person name="Rash S."/>
            <person name="Retterer J."/>
            <person name="Rodriguez A."/>
            <person name="Rogers S."/>
            <person name="Salamov A."/>
            <person name="Salazar A."/>
            <person name="She X."/>
            <person name="Smith D."/>
            <person name="Slezak T."/>
            <person name="Solovyev V."/>
            <person name="Thayer N."/>
            <person name="Tice H."/>
            <person name="Tsai M."/>
            <person name="Ustaszewska A."/>
            <person name="Vo N."/>
            <person name="Wagner M."/>
            <person name="Wheeler J."/>
            <person name="Wu K."/>
            <person name="Xie G."/>
            <person name="Yang J."/>
            <person name="Dubchak I."/>
            <person name="Furey T.S."/>
            <person name="DeJong P."/>
            <person name="Dickson M."/>
            <person name="Gordon D."/>
            <person name="Eichler E.E."/>
            <person name="Pennacchio L.A."/>
            <person name="Richardson P."/>
            <person name="Stubbs L."/>
            <person name="Rokhsar D.S."/>
            <person name="Myers R.M."/>
            <person name="Rubin E.M."/>
            <person name="Lucas S.M."/>
        </authorList>
    </citation>
    <scope>NUCLEOTIDE SEQUENCE [LARGE SCALE GENOMIC DNA]</scope>
</reference>
<reference key="4">
    <citation type="journal article" date="2004" name="Genome Res.">
        <title>The status, quality, and expansion of the NIH full-length cDNA project: the Mammalian Gene Collection (MGC).</title>
        <authorList>
            <consortium name="The MGC Project Team"/>
        </authorList>
    </citation>
    <scope>NUCLEOTIDE SEQUENCE [LARGE SCALE MRNA] (ISOFORM 1)</scope>
    <source>
        <tissue>Uterus</tissue>
    </source>
</reference>
<reference key="5">
    <citation type="journal article" date="2003" name="Nat. Biotechnol.">
        <title>Exploring proteomes and analyzing protein processing by mass spectrometric identification of sorted N-terminal peptides.</title>
        <authorList>
            <person name="Gevaert K."/>
            <person name="Goethals M."/>
            <person name="Martens L."/>
            <person name="Van Damme J."/>
            <person name="Staes A."/>
            <person name="Thomas G.R."/>
            <person name="Vandekerckhove J."/>
        </authorList>
    </citation>
    <scope>PROTEIN SEQUENCE OF 2-7</scope>
    <source>
        <tissue>Platelet</tissue>
    </source>
</reference>
<reference key="6">
    <citation type="journal article" date="2008" name="Ann. Neurol.">
        <title>Mitochondrial complex I deficiency caused by a deleterious NDUFA11 mutation.</title>
        <authorList>
            <person name="Berger I."/>
            <person name="Hershkovitz E."/>
            <person name="Shaag A."/>
            <person name="Edvardson S."/>
            <person name="Saada A."/>
            <person name="Elpeleg O."/>
        </authorList>
    </citation>
    <scope>INVOLVEMENT IN MC1DN14</scope>
</reference>
<reference key="7">
    <citation type="journal article" date="2011" name="BMC Syst. Biol.">
        <title>Initial characterization of the human central proteome.</title>
        <authorList>
            <person name="Burkard T.R."/>
            <person name="Planyavsky M."/>
            <person name="Kaupe I."/>
            <person name="Breitwieser F.P."/>
            <person name="Buerckstuemmer T."/>
            <person name="Bennett K.L."/>
            <person name="Superti-Furga G."/>
            <person name="Colinge J."/>
        </authorList>
    </citation>
    <scope>IDENTIFICATION BY MASS SPECTROMETRY [LARGE SCALE ANALYSIS]</scope>
</reference>
<reference key="8">
    <citation type="journal article" date="2015" name="Proteomics">
        <title>N-terminome analysis of the human mitochondrial proteome.</title>
        <authorList>
            <person name="Vaca Jacome A.S."/>
            <person name="Rabilloud T."/>
            <person name="Schaeffer-Reiss C."/>
            <person name="Rompais M."/>
            <person name="Ayoub D."/>
            <person name="Lane L."/>
            <person name="Bairoch A."/>
            <person name="Van Dorsselaer A."/>
            <person name="Carapito C."/>
        </authorList>
    </citation>
    <scope>IDENTIFICATION BY MASS SPECTROMETRY [LARGE SCALE ANALYSIS]</scope>
</reference>
<reference key="9">
    <citation type="journal article" date="2016" name="Nature">
        <title>Accessory subunits are integral for assembly and function of human mitochondrial complex I.</title>
        <authorList>
            <person name="Stroud D.A."/>
            <person name="Surgenor E.E."/>
            <person name="Formosa L.E."/>
            <person name="Reljic B."/>
            <person name="Frazier A.E."/>
            <person name="Dibley M.G."/>
            <person name="Osellame L.D."/>
            <person name="Stait T."/>
            <person name="Beilharz T.H."/>
            <person name="Thorburn D.R."/>
            <person name="Salim A."/>
            <person name="Ryan M.T."/>
        </authorList>
    </citation>
    <scope>FUNCTION</scope>
    <scope>IDENTIFICATION IN THE NADH-UBIQUINONE OXIDOREDUCTASE COMPLEX</scope>
</reference>
<organism>
    <name type="scientific">Homo sapiens</name>
    <name type="common">Human</name>
    <dbReference type="NCBI Taxonomy" id="9606"/>
    <lineage>
        <taxon>Eukaryota</taxon>
        <taxon>Metazoa</taxon>
        <taxon>Chordata</taxon>
        <taxon>Craniata</taxon>
        <taxon>Vertebrata</taxon>
        <taxon>Euteleostomi</taxon>
        <taxon>Mammalia</taxon>
        <taxon>Eutheria</taxon>
        <taxon>Euarchontoglires</taxon>
        <taxon>Primates</taxon>
        <taxon>Haplorrhini</taxon>
        <taxon>Catarrhini</taxon>
        <taxon>Hominidae</taxon>
        <taxon>Homo</taxon>
    </lineage>
</organism>
<name>NDUAB_HUMAN</name>
<feature type="initiator methionine" description="Removed" evidence="1 4">
    <location>
        <position position="1"/>
    </location>
</feature>
<feature type="chain" id="PRO_0000118841" description="NADH dehydrogenase [ubiquinone] 1 alpha subcomplex subunit 11">
    <location>
        <begin position="2"/>
        <end position="141"/>
    </location>
</feature>
<feature type="transmembrane region" description="Helical" evidence="2">
    <location>
        <begin position="21"/>
        <end position="43"/>
    </location>
</feature>
<feature type="transmembrane region" description="Helical" evidence="2">
    <location>
        <begin position="58"/>
        <end position="80"/>
    </location>
</feature>
<feature type="modified residue" description="N-acetylalanine" evidence="1">
    <location>
        <position position="2"/>
    </location>
</feature>
<feature type="splice variant" id="VSP_033813" description="In isoform 2." evidence="7">
    <original>THNYGIGAAACVYFGIAASLVKMGRLEGWEVFAKPKV</original>
    <variation>KTGSHCVVQAGLKLLASSSPHTSASQSAGIIGMSHCVQRFWVPSSSACLEVLSGESTDVHACSSTRGACNSSGSRPLPELGARASGSLRKGGHTHPAPRGAGALTPVQALIESLLNTLGSNPRT</variation>
    <location>
        <begin position="105"/>
        <end position="141"/>
    </location>
</feature>
<feature type="sequence conflict" description="In Ref. 2; BAC87088." evidence="8" ref="2">
    <original>S</original>
    <variation>G</variation>
    <location sequence="Q86Y39-2">
        <position position="160"/>
    </location>
</feature>
<feature type="sequence conflict" description="In Ref. 2; BAC87088." evidence="8" ref="2">
    <original>T</original>
    <variation>A</variation>
    <location sequence="Q86Y39-2">
        <position position="221"/>
    </location>
</feature>